<feature type="chain" id="PRO_0000254550" description="Putative uncharacterized protein FLJ32756">
    <location>
        <begin position="1"/>
        <end position="177"/>
    </location>
</feature>
<feature type="region of interest" description="Disordered" evidence="1">
    <location>
        <begin position="1"/>
        <end position="27"/>
    </location>
</feature>
<reference key="1">
    <citation type="journal article" date="2004" name="Genome Biol.">
        <title>A genome annotation-driven approach to cloning the human ORFeome.</title>
        <authorList>
            <person name="Collins J.E."/>
            <person name="Wright C.L."/>
            <person name="Edwards C.A."/>
            <person name="Davis M.P."/>
            <person name="Grinham J.A."/>
            <person name="Cole C.G."/>
            <person name="Goward M.E."/>
            <person name="Aguado B."/>
            <person name="Mallya M."/>
            <person name="Mokrab Y."/>
            <person name="Huckle E.J."/>
            <person name="Beare D.M."/>
            <person name="Dunham I."/>
        </authorList>
    </citation>
    <scope>NUCLEOTIDE SEQUENCE [LARGE SCALE MRNA]</scope>
</reference>
<reference key="2">
    <citation type="journal article" date="2004" name="Nat. Genet.">
        <title>Complete sequencing and characterization of 21,243 full-length human cDNAs.</title>
        <authorList>
            <person name="Ota T."/>
            <person name="Suzuki Y."/>
            <person name="Nishikawa T."/>
            <person name="Otsuki T."/>
            <person name="Sugiyama T."/>
            <person name="Irie R."/>
            <person name="Wakamatsu A."/>
            <person name="Hayashi K."/>
            <person name="Sato H."/>
            <person name="Nagai K."/>
            <person name="Kimura K."/>
            <person name="Makita H."/>
            <person name="Sekine M."/>
            <person name="Obayashi M."/>
            <person name="Nishi T."/>
            <person name="Shibahara T."/>
            <person name="Tanaka T."/>
            <person name="Ishii S."/>
            <person name="Yamamoto J."/>
            <person name="Saito K."/>
            <person name="Kawai Y."/>
            <person name="Isono Y."/>
            <person name="Nakamura Y."/>
            <person name="Nagahari K."/>
            <person name="Murakami K."/>
            <person name="Yasuda T."/>
            <person name="Iwayanagi T."/>
            <person name="Wagatsuma M."/>
            <person name="Shiratori A."/>
            <person name="Sudo H."/>
            <person name="Hosoiri T."/>
            <person name="Kaku Y."/>
            <person name="Kodaira H."/>
            <person name="Kondo H."/>
            <person name="Sugawara M."/>
            <person name="Takahashi M."/>
            <person name="Kanda K."/>
            <person name="Yokoi T."/>
            <person name="Furuya T."/>
            <person name="Kikkawa E."/>
            <person name="Omura Y."/>
            <person name="Abe K."/>
            <person name="Kamihara K."/>
            <person name="Katsuta N."/>
            <person name="Sato K."/>
            <person name="Tanikawa M."/>
            <person name="Yamazaki M."/>
            <person name="Ninomiya K."/>
            <person name="Ishibashi T."/>
            <person name="Yamashita H."/>
            <person name="Murakawa K."/>
            <person name="Fujimori K."/>
            <person name="Tanai H."/>
            <person name="Kimata M."/>
            <person name="Watanabe M."/>
            <person name="Hiraoka S."/>
            <person name="Chiba Y."/>
            <person name="Ishida S."/>
            <person name="Ono Y."/>
            <person name="Takiguchi S."/>
            <person name="Watanabe S."/>
            <person name="Yosida M."/>
            <person name="Hotuta T."/>
            <person name="Kusano J."/>
            <person name="Kanehori K."/>
            <person name="Takahashi-Fujii A."/>
            <person name="Hara H."/>
            <person name="Tanase T.-O."/>
            <person name="Nomura Y."/>
            <person name="Togiya S."/>
            <person name="Komai F."/>
            <person name="Hara R."/>
            <person name="Takeuchi K."/>
            <person name="Arita M."/>
            <person name="Imose N."/>
            <person name="Musashino K."/>
            <person name="Yuuki H."/>
            <person name="Oshima A."/>
            <person name="Sasaki N."/>
            <person name="Aotsuka S."/>
            <person name="Yoshikawa Y."/>
            <person name="Matsunawa H."/>
            <person name="Ichihara T."/>
            <person name="Shiohata N."/>
            <person name="Sano S."/>
            <person name="Moriya S."/>
            <person name="Momiyama H."/>
            <person name="Satoh N."/>
            <person name="Takami S."/>
            <person name="Terashima Y."/>
            <person name="Suzuki O."/>
            <person name="Nakagawa S."/>
            <person name="Senoh A."/>
            <person name="Mizoguchi H."/>
            <person name="Goto Y."/>
            <person name="Shimizu F."/>
            <person name="Wakebe H."/>
            <person name="Hishigaki H."/>
            <person name="Watanabe T."/>
            <person name="Sugiyama A."/>
            <person name="Takemoto M."/>
            <person name="Kawakami B."/>
            <person name="Yamazaki M."/>
            <person name="Watanabe K."/>
            <person name="Kumagai A."/>
            <person name="Itakura S."/>
            <person name="Fukuzumi Y."/>
            <person name="Fujimori Y."/>
            <person name="Komiyama M."/>
            <person name="Tashiro H."/>
            <person name="Tanigami A."/>
            <person name="Fujiwara T."/>
            <person name="Ono T."/>
            <person name="Yamada K."/>
            <person name="Fujii Y."/>
            <person name="Ozaki K."/>
            <person name="Hirao M."/>
            <person name="Ohmori Y."/>
            <person name="Kawabata A."/>
            <person name="Hikiji T."/>
            <person name="Kobatake N."/>
            <person name="Inagaki H."/>
            <person name="Ikema Y."/>
            <person name="Okamoto S."/>
            <person name="Okitani R."/>
            <person name="Kawakami T."/>
            <person name="Noguchi S."/>
            <person name="Itoh T."/>
            <person name="Shigeta K."/>
            <person name="Senba T."/>
            <person name="Matsumura K."/>
            <person name="Nakajima Y."/>
            <person name="Mizuno T."/>
            <person name="Morinaga M."/>
            <person name="Sasaki M."/>
            <person name="Togashi T."/>
            <person name="Oyama M."/>
            <person name="Hata H."/>
            <person name="Watanabe M."/>
            <person name="Komatsu T."/>
            <person name="Mizushima-Sugano J."/>
            <person name="Satoh T."/>
            <person name="Shirai Y."/>
            <person name="Takahashi Y."/>
            <person name="Nakagawa K."/>
            <person name="Okumura K."/>
            <person name="Nagase T."/>
            <person name="Nomura N."/>
            <person name="Kikuchi H."/>
            <person name="Masuho Y."/>
            <person name="Yamashita R."/>
            <person name="Nakai K."/>
            <person name="Yada T."/>
            <person name="Nakamura Y."/>
            <person name="Ohara O."/>
            <person name="Isogai T."/>
            <person name="Sugano S."/>
        </authorList>
    </citation>
    <scope>NUCLEOTIDE SEQUENCE [LARGE SCALE MRNA]</scope>
    <source>
        <tissue>Testis</tissue>
    </source>
</reference>
<sequence length="177" mass="19601">MSHSRRAAPTQDQCHTPGFPTSRETSGSIWQARICGSLQALDTWRTHIPRKSPAPTQASQICLLLPESPWRNPTPRGFLKPLINWDAILYFKEKRNIQVTTQAHPQNQASCSSQEVATPGLVPQAAAPKVYERSHDNLNAEAQGLAGAQVSKPQNPITRLCSLKEQSILKIFTKQSI</sequence>
<organism>
    <name type="scientific">Homo sapiens</name>
    <name type="common">Human</name>
    <dbReference type="NCBI Taxonomy" id="9606"/>
    <lineage>
        <taxon>Eukaryota</taxon>
        <taxon>Metazoa</taxon>
        <taxon>Chordata</taxon>
        <taxon>Craniata</taxon>
        <taxon>Vertebrata</taxon>
        <taxon>Euteleostomi</taxon>
        <taxon>Mammalia</taxon>
        <taxon>Eutheria</taxon>
        <taxon>Euarchontoglires</taxon>
        <taxon>Primates</taxon>
        <taxon>Haplorrhini</taxon>
        <taxon>Catarrhini</taxon>
        <taxon>Hominidae</taxon>
        <taxon>Homo</taxon>
    </lineage>
</organism>
<accession>Q96M85</accession>
<keyword id="KW-1185">Reference proteome</keyword>
<protein>
    <recommendedName>
        <fullName>Putative uncharacterized protein FLJ32756</fullName>
    </recommendedName>
</protein>
<name>YV008_HUMAN</name>
<evidence type="ECO:0000256" key="1">
    <source>
        <dbReference type="SAM" id="MobiDB-lite"/>
    </source>
</evidence>
<dbReference type="EMBL" id="CR456602">
    <property type="protein sequence ID" value="CAG30488.1"/>
    <property type="molecule type" value="mRNA"/>
</dbReference>
<dbReference type="EMBL" id="AK057318">
    <property type="status" value="NOT_ANNOTATED_CDS"/>
    <property type="molecule type" value="mRNA"/>
</dbReference>
<dbReference type="GlyGen" id="Q96M85">
    <property type="glycosylation" value="1 site"/>
</dbReference>
<dbReference type="BioMuta" id="-"/>
<dbReference type="MassIVE" id="Q96M85"/>
<dbReference type="PaxDb" id="9606-ENSP00000485166"/>
<dbReference type="AGR" id="HGNC:51221"/>
<dbReference type="neXtProt" id="NX_Q96M85"/>
<dbReference type="eggNOG" id="ENOG502TEZF">
    <property type="taxonomic scope" value="Eukaryota"/>
</dbReference>
<dbReference type="InParanoid" id="Q96M85"/>
<dbReference type="PAN-GO" id="Q96M85">
    <property type="GO annotations" value="0 GO annotations based on evolutionary models"/>
</dbReference>
<dbReference type="Pharos" id="Q96M85">
    <property type="development level" value="Tdark"/>
</dbReference>
<dbReference type="Proteomes" id="UP000005640">
    <property type="component" value="Unplaced"/>
</dbReference>
<dbReference type="RNAct" id="Q96M85">
    <property type="molecule type" value="protein"/>
</dbReference>
<proteinExistence type="evidence at transcript level"/>